<feature type="chain" id="PRO_0000432287" description="4-hydroxyproline 2-epimerase">
    <location>
        <begin position="1"/>
        <end position="320"/>
    </location>
</feature>
<feature type="active site" description="Proton acceptor" evidence="1">
    <location>
        <position position="98"/>
    </location>
</feature>
<feature type="active site" description="Proton donor" evidence="1">
    <location>
        <position position="246"/>
    </location>
</feature>
<feature type="binding site" evidence="1">
    <location>
        <begin position="99"/>
        <end position="100"/>
    </location>
    <ligand>
        <name>substrate</name>
    </ligand>
</feature>
<feature type="binding site" evidence="1">
    <location>
        <position position="218"/>
    </location>
    <ligand>
        <name>substrate</name>
    </ligand>
</feature>
<feature type="binding site" evidence="1">
    <location>
        <position position="242"/>
    </location>
    <ligand>
        <name>substrate</name>
    </ligand>
</feature>
<feature type="binding site" evidence="1">
    <location>
        <begin position="247"/>
        <end position="248"/>
    </location>
    <ligand>
        <name>substrate</name>
    </ligand>
</feature>
<protein>
    <recommendedName>
        <fullName evidence="3">4-hydroxyproline 2-epimerase</fullName>
        <shortName>4Hyp 2-epimerase</shortName>
        <shortName evidence="3">4HypE</shortName>
        <ecNumber evidence="2">5.1.1.8</ecNumber>
    </recommendedName>
</protein>
<evidence type="ECO:0000250" key="1">
    <source>
        <dbReference type="UniProtKB" id="Q4KGU2"/>
    </source>
</evidence>
<evidence type="ECO:0000269" key="2">
    <source>
    </source>
</evidence>
<evidence type="ECO:0000303" key="3">
    <source>
    </source>
</evidence>
<evidence type="ECO:0000305" key="4"/>
<evidence type="ECO:0000312" key="5">
    <source>
        <dbReference type="EMBL" id="EES20685.1"/>
    </source>
</evidence>
<sequence length="320" mass="33363">MRISTLDRRDMKHIHIIDSHTGGEPTRVVVSGFPALGGGTMAERLAVLAREHDRYRAACILEPRGSDVLVGALLCEPVSAGAAAGVIFFNNAGYLGMCGHGTIGLVRTLHHMGRIGPGVHRIETPVGDVEATLHDDLSVSVRNVLAYRHAKDVVVDVPGHGAVTGDVAWGGNWFFLVSDHGQRVAGENVAALAAYASAVRAALERAGVTGRDGAPIDHIELFADDPEYDSRSFVLCPGHAYDRSPCGTGTSAKLACLAADGKLAAGVTWRQASVIGSVFSASYAAAEGGVVPTIRGSAHLSAEATLVIEDDDPFGWGIAS</sequence>
<gene>
    <name evidence="5" type="ORF">BURPS1106B_1521</name>
</gene>
<name>4HYPE_BURPB</name>
<reference key="1">
    <citation type="submission" date="2009-05" db="EMBL/GenBank/DDBJ databases">
        <authorList>
            <person name="Harkins D.M."/>
            <person name="DeShazer D."/>
            <person name="Woods D.E."/>
            <person name="Brinkac L.M."/>
            <person name="Brown K.A."/>
            <person name="Hung G.C."/>
            <person name="Tuanyok A."/>
            <person name="Zhang B."/>
            <person name="Nierman W.C."/>
        </authorList>
    </citation>
    <scope>NUCLEOTIDE SEQUENCE [LARGE SCALE GENOMIC DNA]</scope>
    <source>
        <strain>1106b</strain>
    </source>
</reference>
<reference key="2">
    <citation type="journal article" date="2014" name="Elife">
        <title>Prediction and characterization of enzymatic activities guided by sequence similarity and genome neighborhood networks.</title>
        <authorList>
            <person name="Zhao S."/>
            <person name="Sakai A."/>
            <person name="Zhang X."/>
            <person name="Vetting M.W."/>
            <person name="Kumar R."/>
            <person name="Hillerich B."/>
            <person name="San Francisco B."/>
            <person name="Solbiati J."/>
            <person name="Steves A."/>
            <person name="Brown S."/>
            <person name="Akiva E."/>
            <person name="Barber A."/>
            <person name="Seidel R.D."/>
            <person name="Babbitt P.C."/>
            <person name="Almo S.C."/>
            <person name="Gerlt J.A."/>
            <person name="Jacobson M.P."/>
        </authorList>
    </citation>
    <scope>FUNCTION</scope>
    <scope>CATALYTIC ACTIVITY</scope>
</reference>
<organism>
    <name type="scientific">Burkholderia pseudomallei (strain 1106b)</name>
    <dbReference type="NCBI Taxonomy" id="357347"/>
    <lineage>
        <taxon>Bacteria</taxon>
        <taxon>Pseudomonadati</taxon>
        <taxon>Pseudomonadota</taxon>
        <taxon>Betaproteobacteria</taxon>
        <taxon>Burkholderiales</taxon>
        <taxon>Burkholderiaceae</taxon>
        <taxon>Burkholderia</taxon>
        <taxon>pseudomallei group</taxon>
    </lineage>
</organism>
<accession>C5ZMD2</accession>
<proteinExistence type="evidence at protein level"/>
<comment type="function">
    <text evidence="2">Catalyzes the epimerization of trans-4-hydroxy-L-proline (t4LHyp) to cis-4-hydroxy-D-proline (c4DHyp). Is likely involved in a degradation pathway that converts t4LHyp to alpha-ketoglutarate.</text>
</comment>
<comment type="catalytic activity">
    <reaction evidence="2">
        <text>trans-4-hydroxy-L-proline = cis-4-hydroxy-D-proline</text>
        <dbReference type="Rhea" id="RHEA:21152"/>
        <dbReference type="ChEBI" id="CHEBI:57690"/>
        <dbReference type="ChEBI" id="CHEBI:58375"/>
        <dbReference type="EC" id="5.1.1.8"/>
    </reaction>
</comment>
<comment type="similarity">
    <text evidence="4">Belongs to the proline racemase family.</text>
</comment>
<keyword id="KW-0413">Isomerase</keyword>
<dbReference type="EC" id="5.1.1.8" evidence="2"/>
<dbReference type="EMBL" id="CM000775">
    <property type="protein sequence ID" value="EES20685.1"/>
    <property type="molecule type" value="Genomic_DNA"/>
</dbReference>
<dbReference type="SMR" id="C5ZMD2"/>
<dbReference type="HOGENOM" id="CLU_036729_1_0_4"/>
<dbReference type="GO" id="GO:0047580">
    <property type="term" value="F:4-hydroxyproline epimerase activity"/>
    <property type="evidence" value="ECO:0007669"/>
    <property type="project" value="UniProtKB-EC"/>
</dbReference>
<dbReference type="FunFam" id="3.10.310.10:FF:000012">
    <property type="entry name" value="4-hydroxyproline 2-epimerase"/>
    <property type="match status" value="1"/>
</dbReference>
<dbReference type="Gene3D" id="3.10.310.10">
    <property type="entry name" value="Diaminopimelate Epimerase, Chain A, domain 1"/>
    <property type="match status" value="2"/>
</dbReference>
<dbReference type="InterPro" id="IPR008794">
    <property type="entry name" value="Pro_racemase_fam"/>
</dbReference>
<dbReference type="NCBIfam" id="NF010577">
    <property type="entry name" value="PRK13970.1"/>
    <property type="match status" value="1"/>
</dbReference>
<dbReference type="PANTHER" id="PTHR33442">
    <property type="entry name" value="TRANS-3-HYDROXY-L-PROLINE DEHYDRATASE"/>
    <property type="match status" value="1"/>
</dbReference>
<dbReference type="PANTHER" id="PTHR33442:SF1">
    <property type="entry name" value="TRANS-3-HYDROXY-L-PROLINE DEHYDRATASE"/>
    <property type="match status" value="1"/>
</dbReference>
<dbReference type="Pfam" id="PF05544">
    <property type="entry name" value="Pro_racemase"/>
    <property type="match status" value="1"/>
</dbReference>
<dbReference type="PIRSF" id="PIRSF029792">
    <property type="entry name" value="Pro_racemase"/>
    <property type="match status" value="1"/>
</dbReference>
<dbReference type="SFLD" id="SFLDS00028">
    <property type="entry name" value="Proline_Racemase"/>
    <property type="match status" value="1"/>
</dbReference>
<dbReference type="SUPFAM" id="SSF54506">
    <property type="entry name" value="Diaminopimelate epimerase-like"/>
    <property type="match status" value="1"/>
</dbReference>